<dbReference type="EC" id="2.4.2.1" evidence="1"/>
<dbReference type="EC" id="2.4.2.2" evidence="1"/>
<dbReference type="EMBL" id="CP000510">
    <property type="protein sequence ID" value="ABM04883.1"/>
    <property type="molecule type" value="Genomic_DNA"/>
</dbReference>
<dbReference type="RefSeq" id="WP_011771435.1">
    <property type="nucleotide sequence ID" value="NC_008709.1"/>
</dbReference>
<dbReference type="SMR" id="A1SZG8"/>
<dbReference type="STRING" id="357804.Ping_3196"/>
<dbReference type="KEGG" id="pin:Ping_3196"/>
<dbReference type="eggNOG" id="COG3123">
    <property type="taxonomic scope" value="Bacteria"/>
</dbReference>
<dbReference type="HOGENOM" id="CLU_157874_0_0_6"/>
<dbReference type="OrthoDB" id="9793848at2"/>
<dbReference type="Proteomes" id="UP000000639">
    <property type="component" value="Chromosome"/>
</dbReference>
<dbReference type="GO" id="GO:0005829">
    <property type="term" value="C:cytosol"/>
    <property type="evidence" value="ECO:0007669"/>
    <property type="project" value="TreeGrafter"/>
</dbReference>
<dbReference type="GO" id="GO:0047975">
    <property type="term" value="F:guanosine phosphorylase activity"/>
    <property type="evidence" value="ECO:0007669"/>
    <property type="project" value="UniProtKB-EC"/>
</dbReference>
<dbReference type="GO" id="GO:0004731">
    <property type="term" value="F:purine-nucleoside phosphorylase activity"/>
    <property type="evidence" value="ECO:0007669"/>
    <property type="project" value="UniProtKB-UniRule"/>
</dbReference>
<dbReference type="GO" id="GO:0009032">
    <property type="term" value="F:thymidine phosphorylase activity"/>
    <property type="evidence" value="ECO:0007669"/>
    <property type="project" value="UniProtKB-EC"/>
</dbReference>
<dbReference type="GO" id="GO:0004850">
    <property type="term" value="F:uridine phosphorylase activity"/>
    <property type="evidence" value="ECO:0007669"/>
    <property type="project" value="UniProtKB-EC"/>
</dbReference>
<dbReference type="CDD" id="cd20296">
    <property type="entry name" value="cupin_PpnP-like"/>
    <property type="match status" value="1"/>
</dbReference>
<dbReference type="FunFam" id="2.60.120.10:FF:000016">
    <property type="entry name" value="Pyrimidine/purine nucleoside phosphorylase"/>
    <property type="match status" value="1"/>
</dbReference>
<dbReference type="Gene3D" id="2.60.120.10">
    <property type="entry name" value="Jelly Rolls"/>
    <property type="match status" value="1"/>
</dbReference>
<dbReference type="HAMAP" id="MF_01537">
    <property type="entry name" value="Nucleos_phosphorylase_PpnP"/>
    <property type="match status" value="1"/>
</dbReference>
<dbReference type="InterPro" id="IPR009664">
    <property type="entry name" value="Ppnp"/>
</dbReference>
<dbReference type="InterPro" id="IPR014710">
    <property type="entry name" value="RmlC-like_jellyroll"/>
</dbReference>
<dbReference type="InterPro" id="IPR011051">
    <property type="entry name" value="RmlC_Cupin_sf"/>
</dbReference>
<dbReference type="PANTHER" id="PTHR36540">
    <property type="entry name" value="PYRIMIDINE/PURINE NUCLEOSIDE PHOSPHORYLASE"/>
    <property type="match status" value="1"/>
</dbReference>
<dbReference type="PANTHER" id="PTHR36540:SF1">
    <property type="entry name" value="PYRIMIDINE_PURINE NUCLEOSIDE PHOSPHORYLASE"/>
    <property type="match status" value="1"/>
</dbReference>
<dbReference type="Pfam" id="PF06865">
    <property type="entry name" value="Ppnp"/>
    <property type="match status" value="1"/>
</dbReference>
<dbReference type="SUPFAM" id="SSF51182">
    <property type="entry name" value="RmlC-like cupins"/>
    <property type="match status" value="1"/>
</dbReference>
<accession>A1SZG8</accession>
<protein>
    <recommendedName>
        <fullName evidence="1">Pyrimidine/purine nucleoside phosphorylase</fullName>
        <ecNumber evidence="1">2.4.2.1</ecNumber>
        <ecNumber evidence="1">2.4.2.2</ecNumber>
    </recommendedName>
    <alternativeName>
        <fullName evidence="1">Adenosine phosphorylase</fullName>
    </alternativeName>
    <alternativeName>
        <fullName evidence="1">Cytidine phosphorylase</fullName>
    </alternativeName>
    <alternativeName>
        <fullName evidence="1">Guanosine phosphorylase</fullName>
    </alternativeName>
    <alternativeName>
        <fullName evidence="1">Inosine phosphorylase</fullName>
    </alternativeName>
    <alternativeName>
        <fullName evidence="1">Thymidine phosphorylase</fullName>
    </alternativeName>
    <alternativeName>
        <fullName evidence="1">Uridine phosphorylase</fullName>
    </alternativeName>
    <alternativeName>
        <fullName evidence="1">Xanthosine phosphorylase</fullName>
    </alternativeName>
</protein>
<reference key="1">
    <citation type="journal article" date="2008" name="BMC Genomics">
        <title>Genomics of an extreme psychrophile, Psychromonas ingrahamii.</title>
        <authorList>
            <person name="Riley M."/>
            <person name="Staley J.T."/>
            <person name="Danchin A."/>
            <person name="Wang T.Z."/>
            <person name="Brettin T.S."/>
            <person name="Hauser L.J."/>
            <person name="Land M.L."/>
            <person name="Thompson L.S."/>
        </authorList>
    </citation>
    <scope>NUCLEOTIDE SEQUENCE [LARGE SCALE GENOMIC DNA]</scope>
    <source>
        <strain>DSM 17664 / CCUG 51855 / 37</strain>
    </source>
</reference>
<evidence type="ECO:0000255" key="1">
    <source>
        <dbReference type="HAMAP-Rule" id="MF_01537"/>
    </source>
</evidence>
<keyword id="KW-0328">Glycosyltransferase</keyword>
<keyword id="KW-1185">Reference proteome</keyword>
<keyword id="KW-0808">Transferase</keyword>
<organism>
    <name type="scientific">Psychromonas ingrahamii (strain DSM 17664 / CCUG 51855 / 37)</name>
    <dbReference type="NCBI Taxonomy" id="357804"/>
    <lineage>
        <taxon>Bacteria</taxon>
        <taxon>Pseudomonadati</taxon>
        <taxon>Pseudomonadota</taxon>
        <taxon>Gammaproteobacteria</taxon>
        <taxon>Alteromonadales</taxon>
        <taxon>Psychromonadaceae</taxon>
        <taxon>Psychromonas</taxon>
    </lineage>
</organism>
<feature type="chain" id="PRO_0000292789" description="Pyrimidine/purine nucleoside phosphorylase">
    <location>
        <begin position="1"/>
        <end position="94"/>
    </location>
</feature>
<gene>
    <name evidence="1" type="primary">ppnP</name>
    <name type="ordered locus">Ping_3196</name>
</gene>
<proteinExistence type="inferred from homology"/>
<comment type="function">
    <text evidence="1">Catalyzes the phosphorolysis of diverse nucleosides, yielding D-ribose 1-phosphate and the respective free bases. Can use uridine, adenosine, guanosine, cytidine, thymidine, inosine and xanthosine as substrates. Also catalyzes the reverse reactions.</text>
</comment>
<comment type="catalytic activity">
    <reaction evidence="1">
        <text>a purine D-ribonucleoside + phosphate = a purine nucleobase + alpha-D-ribose 1-phosphate</text>
        <dbReference type="Rhea" id="RHEA:19805"/>
        <dbReference type="ChEBI" id="CHEBI:26386"/>
        <dbReference type="ChEBI" id="CHEBI:43474"/>
        <dbReference type="ChEBI" id="CHEBI:57720"/>
        <dbReference type="ChEBI" id="CHEBI:142355"/>
        <dbReference type="EC" id="2.4.2.1"/>
    </reaction>
</comment>
<comment type="catalytic activity">
    <reaction evidence="1">
        <text>adenosine + phosphate = alpha-D-ribose 1-phosphate + adenine</text>
        <dbReference type="Rhea" id="RHEA:27642"/>
        <dbReference type="ChEBI" id="CHEBI:16335"/>
        <dbReference type="ChEBI" id="CHEBI:16708"/>
        <dbReference type="ChEBI" id="CHEBI:43474"/>
        <dbReference type="ChEBI" id="CHEBI:57720"/>
        <dbReference type="EC" id="2.4.2.1"/>
    </reaction>
</comment>
<comment type="catalytic activity">
    <reaction evidence="1">
        <text>cytidine + phosphate = cytosine + alpha-D-ribose 1-phosphate</text>
        <dbReference type="Rhea" id="RHEA:52540"/>
        <dbReference type="ChEBI" id="CHEBI:16040"/>
        <dbReference type="ChEBI" id="CHEBI:17562"/>
        <dbReference type="ChEBI" id="CHEBI:43474"/>
        <dbReference type="ChEBI" id="CHEBI:57720"/>
        <dbReference type="EC" id="2.4.2.2"/>
    </reaction>
</comment>
<comment type="catalytic activity">
    <reaction evidence="1">
        <text>guanosine + phosphate = alpha-D-ribose 1-phosphate + guanine</text>
        <dbReference type="Rhea" id="RHEA:13233"/>
        <dbReference type="ChEBI" id="CHEBI:16235"/>
        <dbReference type="ChEBI" id="CHEBI:16750"/>
        <dbReference type="ChEBI" id="CHEBI:43474"/>
        <dbReference type="ChEBI" id="CHEBI:57720"/>
        <dbReference type="EC" id="2.4.2.1"/>
    </reaction>
</comment>
<comment type="catalytic activity">
    <reaction evidence="1">
        <text>inosine + phosphate = alpha-D-ribose 1-phosphate + hypoxanthine</text>
        <dbReference type="Rhea" id="RHEA:27646"/>
        <dbReference type="ChEBI" id="CHEBI:17368"/>
        <dbReference type="ChEBI" id="CHEBI:17596"/>
        <dbReference type="ChEBI" id="CHEBI:43474"/>
        <dbReference type="ChEBI" id="CHEBI:57720"/>
        <dbReference type="EC" id="2.4.2.1"/>
    </reaction>
</comment>
<comment type="catalytic activity">
    <reaction evidence="1">
        <text>thymidine + phosphate = 2-deoxy-alpha-D-ribose 1-phosphate + thymine</text>
        <dbReference type="Rhea" id="RHEA:16037"/>
        <dbReference type="ChEBI" id="CHEBI:17748"/>
        <dbReference type="ChEBI" id="CHEBI:17821"/>
        <dbReference type="ChEBI" id="CHEBI:43474"/>
        <dbReference type="ChEBI" id="CHEBI:57259"/>
        <dbReference type="EC" id="2.4.2.2"/>
    </reaction>
</comment>
<comment type="catalytic activity">
    <reaction evidence="1">
        <text>uridine + phosphate = alpha-D-ribose 1-phosphate + uracil</text>
        <dbReference type="Rhea" id="RHEA:24388"/>
        <dbReference type="ChEBI" id="CHEBI:16704"/>
        <dbReference type="ChEBI" id="CHEBI:17568"/>
        <dbReference type="ChEBI" id="CHEBI:43474"/>
        <dbReference type="ChEBI" id="CHEBI:57720"/>
        <dbReference type="EC" id="2.4.2.2"/>
    </reaction>
</comment>
<comment type="catalytic activity">
    <reaction evidence="1">
        <text>xanthosine + phosphate = alpha-D-ribose 1-phosphate + xanthine</text>
        <dbReference type="Rhea" id="RHEA:27638"/>
        <dbReference type="ChEBI" id="CHEBI:17712"/>
        <dbReference type="ChEBI" id="CHEBI:18107"/>
        <dbReference type="ChEBI" id="CHEBI:43474"/>
        <dbReference type="ChEBI" id="CHEBI:57720"/>
        <dbReference type="EC" id="2.4.2.1"/>
    </reaction>
</comment>
<comment type="similarity">
    <text evidence="1">Belongs to the nucleoside phosphorylase PpnP family.</text>
</comment>
<name>PPNP_PSYIN</name>
<sequence>MSFESNEYFDGNVKSIAFQSATLPGTLGVMDIGEYTFDTNAYEFMTVVNGALTVKLPGATDWKTFNAGETFEVEANVSFDVKVKVQTAYLCLYK</sequence>